<sequence length="226" mass="25550">MNPIVINRLQRKLGYTFNHQELLQQALTHRSASSKHNERLEFLGDSILSYVIANALYHRFPRVDEGDMSRMRATLVRGNTLAELAREFELGECLRLGPGELKSGGFRRESILADTVEALIGGVFLDSDIQTVEKLILNWYQTRLDEISPGDKQKDPKTRLQEYLQGRHLPLPTYLVVQVRGEAHDQEFTIHCQVSGLSEPVVGTGSSRRKAEQAAAEQALKKLELE</sequence>
<proteinExistence type="inferred from homology"/>
<name>RNC_ECOK1</name>
<feature type="chain" id="PRO_1000075747" description="Ribonuclease 3">
    <location>
        <begin position="1"/>
        <end position="226"/>
    </location>
</feature>
<feature type="domain" description="RNase III" evidence="1">
    <location>
        <begin position="6"/>
        <end position="128"/>
    </location>
</feature>
<feature type="domain" description="DRBM" evidence="1">
    <location>
        <begin position="155"/>
        <end position="225"/>
    </location>
</feature>
<feature type="active site" evidence="1">
    <location>
        <position position="45"/>
    </location>
</feature>
<feature type="active site" evidence="1">
    <location>
        <position position="117"/>
    </location>
</feature>
<feature type="binding site" evidence="1">
    <location>
        <position position="41"/>
    </location>
    <ligand>
        <name>Mg(2+)</name>
        <dbReference type="ChEBI" id="CHEBI:18420"/>
    </ligand>
</feature>
<feature type="binding site" evidence="1">
    <location>
        <position position="114"/>
    </location>
    <ligand>
        <name>Mg(2+)</name>
        <dbReference type="ChEBI" id="CHEBI:18420"/>
    </ligand>
</feature>
<feature type="binding site" evidence="1">
    <location>
        <position position="117"/>
    </location>
    <ligand>
        <name>Mg(2+)</name>
        <dbReference type="ChEBI" id="CHEBI:18420"/>
    </ligand>
</feature>
<protein>
    <recommendedName>
        <fullName evidence="1">Ribonuclease 3</fullName>
        <ecNumber evidence="1">3.1.26.3</ecNumber>
    </recommendedName>
    <alternativeName>
        <fullName evidence="1">Ribonuclease III</fullName>
        <shortName evidence="1">RNase III</shortName>
    </alternativeName>
</protein>
<keyword id="KW-0963">Cytoplasm</keyword>
<keyword id="KW-0255">Endonuclease</keyword>
<keyword id="KW-0378">Hydrolase</keyword>
<keyword id="KW-0460">Magnesium</keyword>
<keyword id="KW-0479">Metal-binding</keyword>
<keyword id="KW-0507">mRNA processing</keyword>
<keyword id="KW-0540">Nuclease</keyword>
<keyword id="KW-1185">Reference proteome</keyword>
<keyword id="KW-0694">RNA-binding</keyword>
<keyword id="KW-0698">rRNA processing</keyword>
<keyword id="KW-0699">rRNA-binding</keyword>
<keyword id="KW-0819">tRNA processing</keyword>
<accession>A1AE97</accession>
<organism>
    <name type="scientific">Escherichia coli O1:K1 / APEC</name>
    <dbReference type="NCBI Taxonomy" id="405955"/>
    <lineage>
        <taxon>Bacteria</taxon>
        <taxon>Pseudomonadati</taxon>
        <taxon>Pseudomonadota</taxon>
        <taxon>Gammaproteobacteria</taxon>
        <taxon>Enterobacterales</taxon>
        <taxon>Enterobacteriaceae</taxon>
        <taxon>Escherichia</taxon>
    </lineage>
</organism>
<dbReference type="EC" id="3.1.26.3" evidence="1"/>
<dbReference type="EMBL" id="CP000468">
    <property type="protein sequence ID" value="ABJ01987.1"/>
    <property type="molecule type" value="Genomic_DNA"/>
</dbReference>
<dbReference type="RefSeq" id="WP_001068343.1">
    <property type="nucleotide sequence ID" value="NZ_CADILS010000012.1"/>
</dbReference>
<dbReference type="SMR" id="A1AE97"/>
<dbReference type="GeneID" id="93774524"/>
<dbReference type="KEGG" id="ecv:APECO1_3964"/>
<dbReference type="HOGENOM" id="CLU_000907_1_1_6"/>
<dbReference type="Proteomes" id="UP000008216">
    <property type="component" value="Chromosome"/>
</dbReference>
<dbReference type="GO" id="GO:0005737">
    <property type="term" value="C:cytoplasm"/>
    <property type="evidence" value="ECO:0007669"/>
    <property type="project" value="UniProtKB-SubCell"/>
</dbReference>
<dbReference type="GO" id="GO:0003725">
    <property type="term" value="F:double-stranded RNA binding"/>
    <property type="evidence" value="ECO:0007669"/>
    <property type="project" value="TreeGrafter"/>
</dbReference>
<dbReference type="GO" id="GO:0046872">
    <property type="term" value="F:metal ion binding"/>
    <property type="evidence" value="ECO:0007669"/>
    <property type="project" value="UniProtKB-KW"/>
</dbReference>
<dbReference type="GO" id="GO:0004525">
    <property type="term" value="F:ribonuclease III activity"/>
    <property type="evidence" value="ECO:0007669"/>
    <property type="project" value="UniProtKB-UniRule"/>
</dbReference>
<dbReference type="GO" id="GO:0019843">
    <property type="term" value="F:rRNA binding"/>
    <property type="evidence" value="ECO:0007669"/>
    <property type="project" value="UniProtKB-KW"/>
</dbReference>
<dbReference type="GO" id="GO:0006397">
    <property type="term" value="P:mRNA processing"/>
    <property type="evidence" value="ECO:0007669"/>
    <property type="project" value="UniProtKB-UniRule"/>
</dbReference>
<dbReference type="GO" id="GO:0010468">
    <property type="term" value="P:regulation of gene expression"/>
    <property type="evidence" value="ECO:0007669"/>
    <property type="project" value="TreeGrafter"/>
</dbReference>
<dbReference type="GO" id="GO:0006364">
    <property type="term" value="P:rRNA processing"/>
    <property type="evidence" value="ECO:0007669"/>
    <property type="project" value="UniProtKB-UniRule"/>
</dbReference>
<dbReference type="GO" id="GO:0008033">
    <property type="term" value="P:tRNA processing"/>
    <property type="evidence" value="ECO:0007669"/>
    <property type="project" value="UniProtKB-KW"/>
</dbReference>
<dbReference type="CDD" id="cd10845">
    <property type="entry name" value="DSRM_RNAse_III_family"/>
    <property type="match status" value="1"/>
</dbReference>
<dbReference type="CDD" id="cd00593">
    <property type="entry name" value="RIBOc"/>
    <property type="match status" value="1"/>
</dbReference>
<dbReference type="FunFam" id="1.10.1520.10:FF:000001">
    <property type="entry name" value="Ribonuclease 3"/>
    <property type="match status" value="1"/>
</dbReference>
<dbReference type="FunFam" id="3.30.160.20:FF:000003">
    <property type="entry name" value="Ribonuclease 3"/>
    <property type="match status" value="1"/>
</dbReference>
<dbReference type="Gene3D" id="3.30.160.20">
    <property type="match status" value="1"/>
</dbReference>
<dbReference type="Gene3D" id="1.10.1520.10">
    <property type="entry name" value="Ribonuclease III domain"/>
    <property type="match status" value="1"/>
</dbReference>
<dbReference type="HAMAP" id="MF_00104">
    <property type="entry name" value="RNase_III"/>
    <property type="match status" value="1"/>
</dbReference>
<dbReference type="InterPro" id="IPR014720">
    <property type="entry name" value="dsRBD_dom"/>
</dbReference>
<dbReference type="InterPro" id="IPR011907">
    <property type="entry name" value="RNase_III"/>
</dbReference>
<dbReference type="InterPro" id="IPR000999">
    <property type="entry name" value="RNase_III_dom"/>
</dbReference>
<dbReference type="InterPro" id="IPR036389">
    <property type="entry name" value="RNase_III_sf"/>
</dbReference>
<dbReference type="NCBIfam" id="TIGR02191">
    <property type="entry name" value="RNaseIII"/>
    <property type="match status" value="1"/>
</dbReference>
<dbReference type="PANTHER" id="PTHR11207:SF0">
    <property type="entry name" value="RIBONUCLEASE 3"/>
    <property type="match status" value="1"/>
</dbReference>
<dbReference type="PANTHER" id="PTHR11207">
    <property type="entry name" value="RIBONUCLEASE III"/>
    <property type="match status" value="1"/>
</dbReference>
<dbReference type="Pfam" id="PF00035">
    <property type="entry name" value="dsrm"/>
    <property type="match status" value="1"/>
</dbReference>
<dbReference type="Pfam" id="PF14622">
    <property type="entry name" value="Ribonucleas_3_3"/>
    <property type="match status" value="1"/>
</dbReference>
<dbReference type="SMART" id="SM00358">
    <property type="entry name" value="DSRM"/>
    <property type="match status" value="1"/>
</dbReference>
<dbReference type="SMART" id="SM00535">
    <property type="entry name" value="RIBOc"/>
    <property type="match status" value="1"/>
</dbReference>
<dbReference type="SUPFAM" id="SSF54768">
    <property type="entry name" value="dsRNA-binding domain-like"/>
    <property type="match status" value="1"/>
</dbReference>
<dbReference type="SUPFAM" id="SSF69065">
    <property type="entry name" value="RNase III domain-like"/>
    <property type="match status" value="1"/>
</dbReference>
<dbReference type="PROSITE" id="PS50137">
    <property type="entry name" value="DS_RBD"/>
    <property type="match status" value="1"/>
</dbReference>
<dbReference type="PROSITE" id="PS00517">
    <property type="entry name" value="RNASE_3_1"/>
    <property type="match status" value="1"/>
</dbReference>
<dbReference type="PROSITE" id="PS50142">
    <property type="entry name" value="RNASE_3_2"/>
    <property type="match status" value="1"/>
</dbReference>
<gene>
    <name evidence="1" type="primary">rnc</name>
    <name type="ordered locus">Ecok1_24930</name>
    <name type="ORF">APECO1_3964</name>
</gene>
<reference key="1">
    <citation type="journal article" date="2007" name="J. Bacteriol.">
        <title>The genome sequence of avian pathogenic Escherichia coli strain O1:K1:H7 shares strong similarities with human extraintestinal pathogenic E. coli genomes.</title>
        <authorList>
            <person name="Johnson T.J."/>
            <person name="Kariyawasam S."/>
            <person name="Wannemuehler Y."/>
            <person name="Mangiamele P."/>
            <person name="Johnson S.J."/>
            <person name="Doetkott C."/>
            <person name="Skyberg J.A."/>
            <person name="Lynne A.M."/>
            <person name="Johnson J.R."/>
            <person name="Nolan L.K."/>
        </authorList>
    </citation>
    <scope>NUCLEOTIDE SEQUENCE [LARGE SCALE GENOMIC DNA]</scope>
</reference>
<comment type="function">
    <text evidence="1">Digests double-stranded RNA. Involved in the processing of primary rRNA transcript to yield the immediate precursors to the large and small rRNAs (23S and 16S). Processes some mRNAs, and tRNAs when they are encoded in the rRNA operon. Processes pre-crRNA and tracrRNA of type II CRISPR loci if present in the organism.</text>
</comment>
<comment type="catalytic activity">
    <reaction evidence="1">
        <text>Endonucleolytic cleavage to 5'-phosphomonoester.</text>
        <dbReference type="EC" id="3.1.26.3"/>
    </reaction>
</comment>
<comment type="cofactor">
    <cofactor evidence="1">
        <name>Mg(2+)</name>
        <dbReference type="ChEBI" id="CHEBI:18420"/>
    </cofactor>
</comment>
<comment type="subunit">
    <text evidence="1">Homodimer.</text>
</comment>
<comment type="subcellular location">
    <subcellularLocation>
        <location evidence="1">Cytoplasm</location>
    </subcellularLocation>
</comment>
<comment type="similarity">
    <text evidence="1">Belongs to the ribonuclease III family.</text>
</comment>
<evidence type="ECO:0000255" key="1">
    <source>
        <dbReference type="HAMAP-Rule" id="MF_00104"/>
    </source>
</evidence>